<accession>Q5WLP7</accession>
<proteinExistence type="inferred from homology"/>
<feature type="chain" id="PRO_0000260842" description="Large ribosomal subunit protein uL6">
    <location>
        <begin position="1"/>
        <end position="178"/>
    </location>
</feature>
<name>RL6_SHOC1</name>
<evidence type="ECO:0000255" key="1">
    <source>
        <dbReference type="HAMAP-Rule" id="MF_01365"/>
    </source>
</evidence>
<evidence type="ECO:0000305" key="2"/>
<protein>
    <recommendedName>
        <fullName evidence="1">Large ribosomal subunit protein uL6</fullName>
    </recommendedName>
    <alternativeName>
        <fullName evidence="2">50S ribosomal protein L6</fullName>
    </alternativeName>
</protein>
<keyword id="KW-1185">Reference proteome</keyword>
<keyword id="KW-0687">Ribonucleoprotein</keyword>
<keyword id="KW-0689">Ribosomal protein</keyword>
<keyword id="KW-0694">RNA-binding</keyword>
<keyword id="KW-0699">rRNA-binding</keyword>
<reference key="1">
    <citation type="submission" date="2003-10" db="EMBL/GenBank/DDBJ databases">
        <title>The complete genome sequence of the alkaliphilic Bacillus clausii KSM-K16.</title>
        <authorList>
            <person name="Takaki Y."/>
            <person name="Kageyama Y."/>
            <person name="Shimamura S."/>
            <person name="Suzuki H."/>
            <person name="Nishi S."/>
            <person name="Hatada Y."/>
            <person name="Kawai S."/>
            <person name="Ito S."/>
            <person name="Horikoshi K."/>
        </authorList>
    </citation>
    <scope>NUCLEOTIDE SEQUENCE [LARGE SCALE GENOMIC DNA]</scope>
    <source>
        <strain>KSM-K16</strain>
    </source>
</reference>
<dbReference type="EMBL" id="AP006627">
    <property type="protein sequence ID" value="BAD62708.1"/>
    <property type="molecule type" value="Genomic_DNA"/>
</dbReference>
<dbReference type="RefSeq" id="WP_011245029.1">
    <property type="nucleotide sequence ID" value="NC_006582.1"/>
</dbReference>
<dbReference type="SMR" id="Q5WLP7"/>
<dbReference type="STRING" id="66692.ABC0165"/>
<dbReference type="KEGG" id="bcl:ABC0165"/>
<dbReference type="eggNOG" id="COG0097">
    <property type="taxonomic scope" value="Bacteria"/>
</dbReference>
<dbReference type="HOGENOM" id="CLU_065464_1_2_9"/>
<dbReference type="OrthoDB" id="9805007at2"/>
<dbReference type="Proteomes" id="UP000001168">
    <property type="component" value="Chromosome"/>
</dbReference>
<dbReference type="GO" id="GO:0022625">
    <property type="term" value="C:cytosolic large ribosomal subunit"/>
    <property type="evidence" value="ECO:0007669"/>
    <property type="project" value="TreeGrafter"/>
</dbReference>
<dbReference type="GO" id="GO:0019843">
    <property type="term" value="F:rRNA binding"/>
    <property type="evidence" value="ECO:0007669"/>
    <property type="project" value="UniProtKB-UniRule"/>
</dbReference>
<dbReference type="GO" id="GO:0003735">
    <property type="term" value="F:structural constituent of ribosome"/>
    <property type="evidence" value="ECO:0007669"/>
    <property type="project" value="InterPro"/>
</dbReference>
<dbReference type="GO" id="GO:0002181">
    <property type="term" value="P:cytoplasmic translation"/>
    <property type="evidence" value="ECO:0007669"/>
    <property type="project" value="TreeGrafter"/>
</dbReference>
<dbReference type="FunFam" id="3.90.930.12:FF:000001">
    <property type="entry name" value="50S ribosomal protein L6"/>
    <property type="match status" value="1"/>
</dbReference>
<dbReference type="FunFam" id="3.90.930.12:FF:000002">
    <property type="entry name" value="50S ribosomal protein L6"/>
    <property type="match status" value="1"/>
</dbReference>
<dbReference type="Gene3D" id="3.90.930.12">
    <property type="entry name" value="Ribosomal protein L6, alpha-beta domain"/>
    <property type="match status" value="2"/>
</dbReference>
<dbReference type="HAMAP" id="MF_01365_B">
    <property type="entry name" value="Ribosomal_uL6_B"/>
    <property type="match status" value="1"/>
</dbReference>
<dbReference type="InterPro" id="IPR000702">
    <property type="entry name" value="Ribosomal_uL6-like"/>
</dbReference>
<dbReference type="InterPro" id="IPR036789">
    <property type="entry name" value="Ribosomal_uL6-like_a/b-dom_sf"/>
</dbReference>
<dbReference type="InterPro" id="IPR020040">
    <property type="entry name" value="Ribosomal_uL6_a/b-dom"/>
</dbReference>
<dbReference type="InterPro" id="IPR019906">
    <property type="entry name" value="Ribosomal_uL6_bac-type"/>
</dbReference>
<dbReference type="InterPro" id="IPR002358">
    <property type="entry name" value="Ribosomal_uL6_CS"/>
</dbReference>
<dbReference type="NCBIfam" id="TIGR03654">
    <property type="entry name" value="L6_bact"/>
    <property type="match status" value="1"/>
</dbReference>
<dbReference type="PANTHER" id="PTHR11655">
    <property type="entry name" value="60S/50S RIBOSOMAL PROTEIN L6/L9"/>
    <property type="match status" value="1"/>
</dbReference>
<dbReference type="PANTHER" id="PTHR11655:SF14">
    <property type="entry name" value="LARGE RIBOSOMAL SUBUNIT PROTEIN UL6M"/>
    <property type="match status" value="1"/>
</dbReference>
<dbReference type="Pfam" id="PF00347">
    <property type="entry name" value="Ribosomal_L6"/>
    <property type="match status" value="2"/>
</dbReference>
<dbReference type="PIRSF" id="PIRSF002162">
    <property type="entry name" value="Ribosomal_L6"/>
    <property type="match status" value="1"/>
</dbReference>
<dbReference type="PRINTS" id="PR00059">
    <property type="entry name" value="RIBOSOMALL6"/>
</dbReference>
<dbReference type="SUPFAM" id="SSF56053">
    <property type="entry name" value="Ribosomal protein L6"/>
    <property type="match status" value="2"/>
</dbReference>
<dbReference type="PROSITE" id="PS00525">
    <property type="entry name" value="RIBOSOMAL_L6_1"/>
    <property type="match status" value="1"/>
</dbReference>
<organism>
    <name type="scientific">Shouchella clausii (strain KSM-K16)</name>
    <name type="common">Alkalihalobacillus clausii</name>
    <dbReference type="NCBI Taxonomy" id="66692"/>
    <lineage>
        <taxon>Bacteria</taxon>
        <taxon>Bacillati</taxon>
        <taxon>Bacillota</taxon>
        <taxon>Bacilli</taxon>
        <taxon>Bacillales</taxon>
        <taxon>Bacillaceae</taxon>
        <taxon>Shouchella</taxon>
    </lineage>
</organism>
<sequence>MSRVGKKPVIIPDGVTVTFDGNLCTVKGPKGELSRELHPDIKITVEGNEITFERPSDHKEHRALHGTMRALVNNMVEGVTKGFERALELNGVGYRASKSGNKLVLNVGYSHPVEITPEEGLEIEVPSNTKVVVKGINKERVGALASNIRAVRLPEPYKGKGIRYEGEYVRRKEGKTGK</sequence>
<comment type="function">
    <text evidence="1">This protein binds to the 23S rRNA, and is important in its secondary structure. It is located near the subunit interface in the base of the L7/L12 stalk, and near the tRNA binding site of the peptidyltransferase center.</text>
</comment>
<comment type="subunit">
    <text evidence="1">Part of the 50S ribosomal subunit.</text>
</comment>
<comment type="similarity">
    <text evidence="1">Belongs to the universal ribosomal protein uL6 family.</text>
</comment>
<gene>
    <name evidence="1" type="primary">rplF</name>
    <name type="ordered locus">ABC0165</name>
</gene>